<protein>
    <recommendedName>
        <fullName evidence="1">tRNA(Ile)-lysidine synthase</fullName>
        <ecNumber evidence="1">6.3.4.19</ecNumber>
    </recommendedName>
    <alternativeName>
        <fullName evidence="1">tRNA(Ile)-2-lysyl-cytidine synthase</fullName>
    </alternativeName>
    <alternativeName>
        <fullName evidence="1">tRNA(Ile)-lysidine synthetase</fullName>
    </alternativeName>
</protein>
<feature type="chain" id="PRO_0000181648" description="tRNA(Ile)-lysidine synthase">
    <location>
        <begin position="1"/>
        <end position="476"/>
    </location>
</feature>
<feature type="binding site" evidence="1">
    <location>
        <begin position="25"/>
        <end position="30"/>
    </location>
    <ligand>
        <name>ATP</name>
        <dbReference type="ChEBI" id="CHEBI:30616"/>
    </ligand>
</feature>
<organism>
    <name type="scientific">Bacillus licheniformis (strain ATCC 14580 / DSM 13 / JCM 2505 / CCUG 7422 / NBRC 12200 / NCIMB 9375 / NCTC 10341 / NRRL NRS-1264 / Gibson 46)</name>
    <dbReference type="NCBI Taxonomy" id="279010"/>
    <lineage>
        <taxon>Bacteria</taxon>
        <taxon>Bacillati</taxon>
        <taxon>Bacillota</taxon>
        <taxon>Bacilli</taxon>
        <taxon>Bacillales</taxon>
        <taxon>Bacillaceae</taxon>
        <taxon>Bacillus</taxon>
    </lineage>
</organism>
<accession>Q65PF4</accession>
<accession>Q62ZU3</accession>
<name>TILS_BACLD</name>
<evidence type="ECO:0000255" key="1">
    <source>
        <dbReference type="HAMAP-Rule" id="MF_01161"/>
    </source>
</evidence>
<sequence>MKSIEDFMKKYELSFDGVTLIAGVSGGPDSMALLHALHHTVPASATLIAAHVDHMFRGEESERDMRFVQDYCEAEGIQCEAVQIDVLAFAAENNLNKQAAARECRYAFFQELMKRHRAEYLVLGHHGDDQVETMLMKMAKGTVGIGLAGIQPKRRFDSGWLLRPFLKLSKDDLLAYCKENRIPFRTDPSNSEDDYTRNRFRHHVLPFLKKESEDVHKRFQSVSEFLTEDELYLQALTKDKMNTVITSKSSSGVEISIERLLALPMPLQRRGVHLILNYLYENVPSAFSAHHIQVFLDWISQDGPSGSLDFPNGLKVAKSYHTCLFTFQRLQCENVSYHYEISGAGEEELILPGGSSLHVSGPGSTRKLQGNDVFATSPKQVQFPLYVRTRQNGDRVKLKGMNGSKKVKDIFIDEKVPLSKRDSWPIVTDAVGNIIWIPGLKKTIFEELDVTNNDRIVLQYRQHEKCRGLAKNETGY</sequence>
<proteinExistence type="inferred from homology"/>
<comment type="function">
    <text evidence="1">Ligates lysine onto the cytidine present at position 34 of the AUA codon-specific tRNA(Ile) that contains the anticodon CAU, in an ATP-dependent manner. Cytidine is converted to lysidine, thus changing the amino acid specificity of the tRNA from methionine to isoleucine.</text>
</comment>
<comment type="catalytic activity">
    <reaction evidence="1">
        <text>cytidine(34) in tRNA(Ile2) + L-lysine + ATP = lysidine(34) in tRNA(Ile2) + AMP + diphosphate + H(+)</text>
        <dbReference type="Rhea" id="RHEA:43744"/>
        <dbReference type="Rhea" id="RHEA-COMP:10625"/>
        <dbReference type="Rhea" id="RHEA-COMP:10670"/>
        <dbReference type="ChEBI" id="CHEBI:15378"/>
        <dbReference type="ChEBI" id="CHEBI:30616"/>
        <dbReference type="ChEBI" id="CHEBI:32551"/>
        <dbReference type="ChEBI" id="CHEBI:33019"/>
        <dbReference type="ChEBI" id="CHEBI:82748"/>
        <dbReference type="ChEBI" id="CHEBI:83665"/>
        <dbReference type="ChEBI" id="CHEBI:456215"/>
        <dbReference type="EC" id="6.3.4.19"/>
    </reaction>
</comment>
<comment type="subcellular location">
    <subcellularLocation>
        <location evidence="1">Cytoplasm</location>
    </subcellularLocation>
</comment>
<comment type="domain">
    <text>The N-terminal region contains the highly conserved SGGXDS motif, predicted to be a P-loop motif involved in ATP binding.</text>
</comment>
<comment type="similarity">
    <text evidence="1">Belongs to the tRNA(Ile)-lysidine synthase family.</text>
</comment>
<reference key="1">
    <citation type="journal article" date="2004" name="J. Mol. Microbiol. Biotechnol.">
        <title>The complete genome sequence of Bacillus licheniformis DSM13, an organism with great industrial potential.</title>
        <authorList>
            <person name="Veith B."/>
            <person name="Herzberg C."/>
            <person name="Steckel S."/>
            <person name="Feesche J."/>
            <person name="Maurer K.H."/>
            <person name="Ehrenreich P."/>
            <person name="Baeumer S."/>
            <person name="Henne A."/>
            <person name="Liesegang H."/>
            <person name="Merkl R."/>
            <person name="Ehrenreich A."/>
            <person name="Gottschalk G."/>
        </authorList>
    </citation>
    <scope>NUCLEOTIDE SEQUENCE [LARGE SCALE GENOMIC DNA]</scope>
    <source>
        <strain>ATCC 14580 / DSM 13 / JCM 2505 / CCUG 7422 / NBRC 12200 / NCIMB 9375 / NCTC 10341 / NRRL NRS-1264 / Gibson 46</strain>
    </source>
</reference>
<reference key="2">
    <citation type="journal article" date="2004" name="Genome Biol.">
        <title>Complete genome sequence of the industrial bacterium Bacillus licheniformis and comparisons with closely related Bacillus species.</title>
        <authorList>
            <person name="Rey M.W."/>
            <person name="Ramaiya P."/>
            <person name="Nelson B.A."/>
            <person name="Brody-Karpin S.D."/>
            <person name="Zaretsky E.J."/>
            <person name="Tang M."/>
            <person name="Lopez de Leon A."/>
            <person name="Xiang H."/>
            <person name="Gusti V."/>
            <person name="Clausen I.G."/>
            <person name="Olsen P.B."/>
            <person name="Rasmussen M.D."/>
            <person name="Andersen J.T."/>
            <person name="Joergensen P.L."/>
            <person name="Larsen T.S."/>
            <person name="Sorokin A."/>
            <person name="Bolotin A."/>
            <person name="Lapidus A."/>
            <person name="Galleron N."/>
            <person name="Ehrlich S.D."/>
            <person name="Berka R.M."/>
        </authorList>
    </citation>
    <scope>NUCLEOTIDE SEQUENCE [LARGE SCALE GENOMIC DNA]</scope>
    <source>
        <strain>ATCC 14580 / DSM 13 / JCM 2505 / CCUG 7422 / NBRC 12200 / NCIMB 9375 / NCTC 10341 / NRRL NRS-1264 / Gibson 46</strain>
    </source>
</reference>
<dbReference type="EC" id="6.3.4.19" evidence="1"/>
<dbReference type="EMBL" id="AE017333">
    <property type="protein sequence ID" value="AAU39060.1"/>
    <property type="molecule type" value="Genomic_DNA"/>
</dbReference>
<dbReference type="EMBL" id="CP000002">
    <property type="protein sequence ID" value="AAU21715.1"/>
    <property type="molecule type" value="Genomic_DNA"/>
</dbReference>
<dbReference type="RefSeq" id="WP_011197473.1">
    <property type="nucleotide sequence ID" value="NC_006322.1"/>
</dbReference>
<dbReference type="SMR" id="Q65PF4"/>
<dbReference type="STRING" id="279010.BL00503"/>
<dbReference type="GeneID" id="92858966"/>
<dbReference type="KEGG" id="bld:BLi00083"/>
<dbReference type="KEGG" id="bli:BL00503"/>
<dbReference type="PATRIC" id="fig|279010.13.peg.73"/>
<dbReference type="eggNOG" id="COG0037">
    <property type="taxonomic scope" value="Bacteria"/>
</dbReference>
<dbReference type="HOGENOM" id="CLU_018869_0_1_9"/>
<dbReference type="Proteomes" id="UP000000606">
    <property type="component" value="Chromosome"/>
</dbReference>
<dbReference type="GO" id="GO:0005737">
    <property type="term" value="C:cytoplasm"/>
    <property type="evidence" value="ECO:0007669"/>
    <property type="project" value="UniProtKB-SubCell"/>
</dbReference>
<dbReference type="GO" id="GO:0005524">
    <property type="term" value="F:ATP binding"/>
    <property type="evidence" value="ECO:0007669"/>
    <property type="project" value="UniProtKB-UniRule"/>
</dbReference>
<dbReference type="GO" id="GO:0032267">
    <property type="term" value="F:tRNA(Ile)-lysidine synthase activity"/>
    <property type="evidence" value="ECO:0007669"/>
    <property type="project" value="UniProtKB-EC"/>
</dbReference>
<dbReference type="GO" id="GO:0006400">
    <property type="term" value="P:tRNA modification"/>
    <property type="evidence" value="ECO:0007669"/>
    <property type="project" value="UniProtKB-UniRule"/>
</dbReference>
<dbReference type="CDD" id="cd01992">
    <property type="entry name" value="TilS_N"/>
    <property type="match status" value="1"/>
</dbReference>
<dbReference type="Gene3D" id="3.30.465.60">
    <property type="match status" value="1"/>
</dbReference>
<dbReference type="Gene3D" id="3.40.50.620">
    <property type="entry name" value="HUPs"/>
    <property type="match status" value="1"/>
</dbReference>
<dbReference type="HAMAP" id="MF_01161">
    <property type="entry name" value="tRNA_Ile_lys_synt"/>
    <property type="match status" value="1"/>
</dbReference>
<dbReference type="InterPro" id="IPR012796">
    <property type="entry name" value="Lysidine-tRNA-synth_C"/>
</dbReference>
<dbReference type="InterPro" id="IPR014729">
    <property type="entry name" value="Rossmann-like_a/b/a_fold"/>
</dbReference>
<dbReference type="InterPro" id="IPR011063">
    <property type="entry name" value="TilS/TtcA_N"/>
</dbReference>
<dbReference type="InterPro" id="IPR012094">
    <property type="entry name" value="tRNA_Ile_lys_synt"/>
</dbReference>
<dbReference type="InterPro" id="IPR012795">
    <property type="entry name" value="tRNA_Ile_lys_synt_N"/>
</dbReference>
<dbReference type="InterPro" id="IPR015262">
    <property type="entry name" value="tRNA_Ile_lys_synt_subst-bd"/>
</dbReference>
<dbReference type="NCBIfam" id="TIGR02433">
    <property type="entry name" value="lysidine_TilS_C"/>
    <property type="match status" value="1"/>
</dbReference>
<dbReference type="NCBIfam" id="TIGR02432">
    <property type="entry name" value="lysidine_TilS_N"/>
    <property type="match status" value="1"/>
</dbReference>
<dbReference type="PANTHER" id="PTHR43033">
    <property type="entry name" value="TRNA(ILE)-LYSIDINE SYNTHASE-RELATED"/>
    <property type="match status" value="1"/>
</dbReference>
<dbReference type="PANTHER" id="PTHR43033:SF1">
    <property type="entry name" value="TRNA(ILE)-LYSIDINE SYNTHASE-RELATED"/>
    <property type="match status" value="1"/>
</dbReference>
<dbReference type="Pfam" id="PF01171">
    <property type="entry name" value="ATP_bind_3"/>
    <property type="match status" value="1"/>
</dbReference>
<dbReference type="Pfam" id="PF09179">
    <property type="entry name" value="TilS"/>
    <property type="match status" value="1"/>
</dbReference>
<dbReference type="Pfam" id="PF11734">
    <property type="entry name" value="TilS_C"/>
    <property type="match status" value="1"/>
</dbReference>
<dbReference type="SMART" id="SM00977">
    <property type="entry name" value="TilS_C"/>
    <property type="match status" value="1"/>
</dbReference>
<dbReference type="SUPFAM" id="SSF52402">
    <property type="entry name" value="Adenine nucleotide alpha hydrolases-like"/>
    <property type="match status" value="1"/>
</dbReference>
<dbReference type="SUPFAM" id="SSF82829">
    <property type="entry name" value="MesJ substrate recognition domain-like"/>
    <property type="match status" value="1"/>
</dbReference>
<dbReference type="SUPFAM" id="SSF56037">
    <property type="entry name" value="PheT/TilS domain"/>
    <property type="match status" value="1"/>
</dbReference>
<gene>
    <name evidence="1" type="primary">tilS</name>
    <name type="ordered locus">BLi00083</name>
    <name type="ordered locus">BL00503</name>
</gene>
<keyword id="KW-0067">ATP-binding</keyword>
<keyword id="KW-0963">Cytoplasm</keyword>
<keyword id="KW-0436">Ligase</keyword>
<keyword id="KW-0547">Nucleotide-binding</keyword>
<keyword id="KW-1185">Reference proteome</keyword>
<keyword id="KW-0819">tRNA processing</keyword>